<gene>
    <name evidence="4" type="primary">DTX29</name>
    <name evidence="6" type="ordered locus">At3g26590</name>
    <name evidence="7" type="ORF">MFE16.12</name>
</gene>
<dbReference type="EMBL" id="X97826">
    <property type="protein sequence ID" value="CAA66405.1"/>
    <property type="status" value="ALT_FRAME"/>
    <property type="molecule type" value="mRNA"/>
</dbReference>
<dbReference type="EMBL" id="AB028611">
    <property type="protein sequence ID" value="BAB01841.1"/>
    <property type="molecule type" value="Genomic_DNA"/>
</dbReference>
<dbReference type="EMBL" id="CP002686">
    <property type="protein sequence ID" value="AEE77183.1"/>
    <property type="molecule type" value="Genomic_DNA"/>
</dbReference>
<dbReference type="EMBL" id="AY057664">
    <property type="protein sequence ID" value="AAL15295.1"/>
    <property type="molecule type" value="mRNA"/>
</dbReference>
<dbReference type="EMBL" id="BT002302">
    <property type="protein sequence ID" value="AAN73299.1"/>
    <property type="molecule type" value="mRNA"/>
</dbReference>
<dbReference type="EMBL" id="X98130">
    <property type="protein sequence ID" value="CAA66809.1"/>
    <property type="molecule type" value="Genomic_DNA"/>
</dbReference>
<dbReference type="RefSeq" id="NP_189291.1">
    <property type="nucleotide sequence ID" value="NM_113567.4"/>
</dbReference>
<dbReference type="SMR" id="Q38956"/>
<dbReference type="FunCoup" id="Q38956">
    <property type="interactions" value="1"/>
</dbReference>
<dbReference type="IntAct" id="Q38956">
    <property type="interactions" value="1"/>
</dbReference>
<dbReference type="STRING" id="3702.Q38956"/>
<dbReference type="PaxDb" id="3702-AT3G26590.1"/>
<dbReference type="ProteomicsDB" id="224282"/>
<dbReference type="EnsemblPlants" id="AT3G26590.1">
    <property type="protein sequence ID" value="AT3G26590.1"/>
    <property type="gene ID" value="AT3G26590"/>
</dbReference>
<dbReference type="GeneID" id="822267"/>
<dbReference type="Gramene" id="AT3G26590.1">
    <property type="protein sequence ID" value="AT3G26590.1"/>
    <property type="gene ID" value="AT3G26590"/>
</dbReference>
<dbReference type="KEGG" id="ath:AT3G26590"/>
<dbReference type="Araport" id="AT3G26590"/>
<dbReference type="TAIR" id="AT3G26590"/>
<dbReference type="eggNOG" id="KOG1347">
    <property type="taxonomic scope" value="Eukaryota"/>
</dbReference>
<dbReference type="HOGENOM" id="CLU_012893_1_4_1"/>
<dbReference type="InParanoid" id="Q38956"/>
<dbReference type="OMA" id="GAGQHDM"/>
<dbReference type="PhylomeDB" id="Q38956"/>
<dbReference type="PRO" id="PR:Q38956"/>
<dbReference type="Proteomes" id="UP000006548">
    <property type="component" value="Chromosome 3"/>
</dbReference>
<dbReference type="ExpressionAtlas" id="Q38956">
    <property type="expression patterns" value="baseline and differential"/>
</dbReference>
<dbReference type="GO" id="GO:0000325">
    <property type="term" value="C:plant-type vacuole"/>
    <property type="evidence" value="ECO:0007005"/>
    <property type="project" value="TAIR"/>
</dbReference>
<dbReference type="GO" id="GO:0005774">
    <property type="term" value="C:vacuolar membrane"/>
    <property type="evidence" value="ECO:0007669"/>
    <property type="project" value="UniProtKB-SubCell"/>
</dbReference>
<dbReference type="GO" id="GO:0005773">
    <property type="term" value="C:vacuole"/>
    <property type="evidence" value="ECO:0000314"/>
    <property type="project" value="UniProtKB"/>
</dbReference>
<dbReference type="GO" id="GO:0015297">
    <property type="term" value="F:antiporter activity"/>
    <property type="evidence" value="ECO:0007669"/>
    <property type="project" value="InterPro"/>
</dbReference>
<dbReference type="GO" id="GO:0042910">
    <property type="term" value="F:xenobiotic transmembrane transporter activity"/>
    <property type="evidence" value="ECO:0007669"/>
    <property type="project" value="InterPro"/>
</dbReference>
<dbReference type="GO" id="GO:1990961">
    <property type="term" value="P:xenobiotic detoxification by transmembrane export across the plasma membrane"/>
    <property type="evidence" value="ECO:0007669"/>
    <property type="project" value="InterPro"/>
</dbReference>
<dbReference type="CDD" id="cd13132">
    <property type="entry name" value="MATE_eukaryotic"/>
    <property type="match status" value="1"/>
</dbReference>
<dbReference type="InterPro" id="IPR045069">
    <property type="entry name" value="MATE_euk"/>
</dbReference>
<dbReference type="InterPro" id="IPR002528">
    <property type="entry name" value="MATE_fam"/>
</dbReference>
<dbReference type="NCBIfam" id="TIGR00797">
    <property type="entry name" value="matE"/>
    <property type="match status" value="1"/>
</dbReference>
<dbReference type="PANTHER" id="PTHR11206">
    <property type="entry name" value="MULTIDRUG RESISTANCE PROTEIN"/>
    <property type="match status" value="1"/>
</dbReference>
<dbReference type="Pfam" id="PF01554">
    <property type="entry name" value="MatE"/>
    <property type="match status" value="2"/>
</dbReference>
<protein>
    <recommendedName>
        <fullName evidence="4">Protein DETOXIFICATION 29</fullName>
        <shortName evidence="4">AtDTX29</shortName>
    </recommendedName>
    <alternativeName>
        <fullName evidence="5">Multidrug and toxic compound extrusion protein 29</fullName>
        <shortName evidence="5">MATE protein 29</shortName>
    </alternativeName>
</protein>
<comment type="subcellular location">
    <subcellularLocation>
        <location evidence="2 3">Vacuole membrane</location>
        <topology evidence="1 3">Multi-pass membrane protein</topology>
    </subcellularLocation>
</comment>
<comment type="similarity">
    <text evidence="5">Belongs to the multi antimicrobial extrusion (MATE) (TC 2.A.66.1) family.</text>
</comment>
<comment type="sequence caution" evidence="5">
    <conflict type="frameshift">
        <sequence resource="EMBL-CDS" id="CAA66405"/>
    </conflict>
</comment>
<sequence length="500" mass="54321">MAKDKDITETLLTAAEERSDLPFLSVDDIPPITTVGGFVREFNVETKKLWYLAGPAIFTSVNQYSLGAITQVFAGHISTIALAAVSVENSVVAGFSFGIMLGMGSALETLCGQAFGAGKLSMLGVYLQRSWVILNVTALILSLLYIFAAPILASIGQTAAISSAAGIFSIYMIPQIFAYAINFPTAKFLQSQSKIMVMAVISAVALVIHVPLTWFVIVKLQWGMPGLAVVLNASWCFIDMAQLVYIFSGTCGEAWSGFSWEAFHNLWSFVRLSLASAVMLCLEVWYFMAIILFAGYLKNAEISVAALSICMNILGWTAMIAIGMNTAVSVRVSNELGANHPRTAKFSLLVAVITSTLIGFIVSMILLIFRDQYPSLFVKDEKVIILVKELTPILALSIVINNVQPVLSGVAVGAGWQAVVAYVNIACYYVFGIPFGLLLGYKLNYGVMGIWCGMLTGTVVQTIVLTWMICKTNWDTEASMAEDRIREWGGEVSEIKQLIN</sequence>
<organism>
    <name type="scientific">Arabidopsis thaliana</name>
    <name type="common">Mouse-ear cress</name>
    <dbReference type="NCBI Taxonomy" id="3702"/>
    <lineage>
        <taxon>Eukaryota</taxon>
        <taxon>Viridiplantae</taxon>
        <taxon>Streptophyta</taxon>
        <taxon>Embryophyta</taxon>
        <taxon>Tracheophyta</taxon>
        <taxon>Spermatophyta</taxon>
        <taxon>Magnoliopsida</taxon>
        <taxon>eudicotyledons</taxon>
        <taxon>Gunneridae</taxon>
        <taxon>Pentapetalae</taxon>
        <taxon>rosids</taxon>
        <taxon>malvids</taxon>
        <taxon>Brassicales</taxon>
        <taxon>Brassicaceae</taxon>
        <taxon>Camelineae</taxon>
        <taxon>Arabidopsis</taxon>
    </lineage>
</organism>
<accession>Q38956</accession>
<accession>Q96278</accession>
<name>DTX29_ARATH</name>
<proteinExistence type="evidence at protein level"/>
<keyword id="KW-0472">Membrane</keyword>
<keyword id="KW-1185">Reference proteome</keyword>
<keyword id="KW-0812">Transmembrane</keyword>
<keyword id="KW-1133">Transmembrane helix</keyword>
<keyword id="KW-0813">Transport</keyword>
<keyword id="KW-0926">Vacuole</keyword>
<evidence type="ECO:0000255" key="1"/>
<evidence type="ECO:0000269" key="2">
    <source>
    </source>
</evidence>
<evidence type="ECO:0000269" key="3">
    <source>
    </source>
</evidence>
<evidence type="ECO:0000303" key="4">
    <source>
    </source>
</evidence>
<evidence type="ECO:0000305" key="5"/>
<evidence type="ECO:0000312" key="6">
    <source>
        <dbReference type="Araport" id="AT3G26590"/>
    </source>
</evidence>
<evidence type="ECO:0000312" key="7">
    <source>
        <dbReference type="EMBL" id="BAB01841.1"/>
    </source>
</evidence>
<evidence type="ECO:0000312" key="8">
    <source>
        <dbReference type="EMBL" id="CAA66405.1"/>
    </source>
</evidence>
<feature type="chain" id="PRO_0000434070" description="Protein DETOXIFICATION 29">
    <location>
        <begin position="1"/>
        <end position="500"/>
    </location>
</feature>
<feature type="transmembrane region" description="Helical" evidence="1">
    <location>
        <begin position="67"/>
        <end position="87"/>
    </location>
</feature>
<feature type="transmembrane region" description="Helical" evidence="1">
    <location>
        <begin position="91"/>
        <end position="111"/>
    </location>
</feature>
<feature type="transmembrane region" description="Helical" evidence="1">
    <location>
        <begin position="132"/>
        <end position="152"/>
    </location>
</feature>
<feature type="transmembrane region" description="Helical" evidence="1">
    <location>
        <begin position="161"/>
        <end position="181"/>
    </location>
</feature>
<feature type="transmembrane region" description="Helical" evidence="1">
    <location>
        <begin position="197"/>
        <end position="217"/>
    </location>
</feature>
<feature type="transmembrane region" description="Helical" evidence="1">
    <location>
        <begin position="227"/>
        <end position="247"/>
    </location>
</feature>
<feature type="transmembrane region" description="Helical" evidence="1">
    <location>
        <begin position="277"/>
        <end position="297"/>
    </location>
</feature>
<feature type="transmembrane region" description="Helical" evidence="1">
    <location>
        <begin position="302"/>
        <end position="322"/>
    </location>
</feature>
<feature type="transmembrane region" description="Helical" evidence="1">
    <location>
        <begin position="349"/>
        <end position="369"/>
    </location>
</feature>
<feature type="transmembrane region" description="Helical" evidence="1">
    <location>
        <begin position="393"/>
        <end position="413"/>
    </location>
</feature>
<feature type="transmembrane region" description="Helical" evidence="1">
    <location>
        <begin position="419"/>
        <end position="439"/>
    </location>
</feature>
<feature type="transmembrane region" description="Helical" evidence="1">
    <location>
        <begin position="449"/>
        <end position="469"/>
    </location>
</feature>
<reference key="1">
    <citation type="journal article" date="1996" name="Nucleic Acids Res.">
        <title>Sequence analysis of an 81 kb contig from Arabidopsis thaliana chromosome III.</title>
        <authorList>
            <person name="Quigley F."/>
            <person name="Dao P."/>
            <person name="Cottet A."/>
            <person name="Mache R."/>
        </authorList>
    </citation>
    <scope>NUCLEOTIDE SEQUENCE [MRNA]</scope>
    <source>
        <strain>cv. Columbia</strain>
        <tissue evidence="8">Shoot</tissue>
    </source>
</reference>
<reference key="2">
    <citation type="journal article" date="2000" name="DNA Res.">
        <title>Structural analysis of Arabidopsis thaliana chromosome 3. I. Sequence features of the regions of 4,504,864 bp covered by sixty P1 and TAC clones.</title>
        <authorList>
            <person name="Sato S."/>
            <person name="Nakamura Y."/>
            <person name="Kaneko T."/>
            <person name="Katoh T."/>
            <person name="Asamizu E."/>
            <person name="Tabata S."/>
        </authorList>
    </citation>
    <scope>NUCLEOTIDE SEQUENCE [LARGE SCALE GENOMIC DNA]</scope>
    <source>
        <strain>cv. Columbia</strain>
    </source>
</reference>
<reference key="3">
    <citation type="journal article" date="2017" name="Plant J.">
        <title>Araport11: a complete reannotation of the Arabidopsis thaliana reference genome.</title>
        <authorList>
            <person name="Cheng C.Y."/>
            <person name="Krishnakumar V."/>
            <person name="Chan A.P."/>
            <person name="Thibaud-Nissen F."/>
            <person name="Schobel S."/>
            <person name="Town C.D."/>
        </authorList>
    </citation>
    <scope>GENOME REANNOTATION</scope>
    <source>
        <strain>cv. Columbia</strain>
    </source>
</reference>
<reference key="4">
    <citation type="journal article" date="2003" name="Science">
        <title>Empirical analysis of transcriptional activity in the Arabidopsis genome.</title>
        <authorList>
            <person name="Yamada K."/>
            <person name="Lim J."/>
            <person name="Dale J.M."/>
            <person name="Chen H."/>
            <person name="Shinn P."/>
            <person name="Palm C.J."/>
            <person name="Southwick A.M."/>
            <person name="Wu H.C."/>
            <person name="Kim C.J."/>
            <person name="Nguyen M."/>
            <person name="Pham P.K."/>
            <person name="Cheuk R.F."/>
            <person name="Karlin-Newmann G."/>
            <person name="Liu S.X."/>
            <person name="Lam B."/>
            <person name="Sakano H."/>
            <person name="Wu T."/>
            <person name="Yu G."/>
            <person name="Miranda M."/>
            <person name="Quach H.L."/>
            <person name="Tripp M."/>
            <person name="Chang C.H."/>
            <person name="Lee J.M."/>
            <person name="Toriumi M.J."/>
            <person name="Chan M.M."/>
            <person name="Tang C.C."/>
            <person name="Onodera C.S."/>
            <person name="Deng J.M."/>
            <person name="Akiyama K."/>
            <person name="Ansari Y."/>
            <person name="Arakawa T."/>
            <person name="Banh J."/>
            <person name="Banno F."/>
            <person name="Bowser L."/>
            <person name="Brooks S.Y."/>
            <person name="Carninci P."/>
            <person name="Chao Q."/>
            <person name="Choy N."/>
            <person name="Enju A."/>
            <person name="Goldsmith A.D."/>
            <person name="Gurjal M."/>
            <person name="Hansen N.F."/>
            <person name="Hayashizaki Y."/>
            <person name="Johnson-Hopson C."/>
            <person name="Hsuan V.W."/>
            <person name="Iida K."/>
            <person name="Karnes M."/>
            <person name="Khan S."/>
            <person name="Koesema E."/>
            <person name="Ishida J."/>
            <person name="Jiang P.X."/>
            <person name="Jones T."/>
            <person name="Kawai J."/>
            <person name="Kamiya A."/>
            <person name="Meyers C."/>
            <person name="Nakajima M."/>
            <person name="Narusaka M."/>
            <person name="Seki M."/>
            <person name="Sakurai T."/>
            <person name="Satou M."/>
            <person name="Tamse R."/>
            <person name="Vaysberg M."/>
            <person name="Wallender E.K."/>
            <person name="Wong C."/>
            <person name="Yamamura Y."/>
            <person name="Yuan S."/>
            <person name="Shinozaki K."/>
            <person name="Davis R.W."/>
            <person name="Theologis A."/>
            <person name="Ecker J.R."/>
        </authorList>
    </citation>
    <scope>NUCLEOTIDE SEQUENCE [LARGE SCALE MRNA]</scope>
    <source>
        <strain>cv. Columbia</strain>
    </source>
</reference>
<reference key="5">
    <citation type="journal article" date="2002" name="J. Biol. Chem.">
        <title>Functional cloning and characterization of a plant efflux carrier for multidrug and heavy metal detoxification.</title>
        <authorList>
            <person name="Li L."/>
            <person name="He Z."/>
            <person name="Pandey G.K."/>
            <person name="Tsuchiya T."/>
            <person name="Luan S."/>
        </authorList>
    </citation>
    <scope>GENE FAMILY</scope>
    <scope>NOMENCLATURE</scope>
</reference>
<reference key="6">
    <citation type="journal article" date="2003" name="Eur. J. Biochem.">
        <title>The multidrug/oligosaccharidyl-lipid/polysaccharide (MOP) exporter superfamily.</title>
        <authorList>
            <person name="Hvorup R.N."/>
            <person name="Winnen B."/>
            <person name="Chang A.B."/>
            <person name="Jiang Y."/>
            <person name="Zhou X.F."/>
            <person name="Saier M.H. Jr."/>
        </authorList>
    </citation>
    <scope>GENE FAMILY</scope>
</reference>
<reference key="7">
    <citation type="journal article" date="2007" name="Mol. Cell. Proteomics">
        <title>A proteomics dissection of Arabidopsis thaliana vacuoles isolated from cell culture.</title>
        <authorList>
            <person name="Jaquinod M."/>
            <person name="Villiers F."/>
            <person name="Kieffer-Jaquinod S."/>
            <person name="Hugouvieux V."/>
            <person name="Bruley C."/>
            <person name="Garin J."/>
            <person name="Bourguignon J."/>
        </authorList>
    </citation>
    <scope>IDENTIFICATION BY MASS SPECTROMETRY</scope>
    <scope>SUBCELLULAR LOCATION [LARGE SCALE ANALYSIS]</scope>
</reference>
<reference key="8">
    <citation type="journal article" date="2013" name="Plant Cell Physiol.">
        <title>Studies on vacuolar membrane microdomains isolated from Arabidopsis suspension-cultured cells: local distribution of vacuolar membrane proteins.</title>
        <authorList>
            <person name="Yoshida K."/>
            <person name="Ohnishi M."/>
            <person name="Fukao Y."/>
            <person name="Okazaki Y."/>
            <person name="Fujiwara M."/>
            <person name="Song C."/>
            <person name="Nakanishi Y."/>
            <person name="Saito K."/>
            <person name="Shimmen T."/>
            <person name="Suzaki T."/>
            <person name="Hayashi F."/>
            <person name="Fukaki H."/>
            <person name="Maeshima M."/>
            <person name="Mimura T."/>
        </authorList>
    </citation>
    <scope>IDENTIFICATION BY MASS SPECTROMETRY</scope>
    <scope>SUBCELLULAR LOCATION</scope>
</reference>